<feature type="chain" id="PRO_0000126906" description="Phenylalanine--tRNA ligase beta subunit">
    <location>
        <begin position="1"/>
        <end position="802"/>
    </location>
</feature>
<feature type="domain" description="tRNA-binding" evidence="1">
    <location>
        <begin position="40"/>
        <end position="155"/>
    </location>
</feature>
<feature type="domain" description="B5" evidence="1">
    <location>
        <begin position="409"/>
        <end position="484"/>
    </location>
</feature>
<feature type="domain" description="FDX-ACB" evidence="1">
    <location>
        <begin position="709"/>
        <end position="802"/>
    </location>
</feature>
<feature type="binding site" evidence="1">
    <location>
        <position position="462"/>
    </location>
    <ligand>
        <name>Mg(2+)</name>
        <dbReference type="ChEBI" id="CHEBI:18420"/>
        <note>shared with alpha subunit</note>
    </ligand>
</feature>
<feature type="binding site" evidence="1">
    <location>
        <position position="468"/>
    </location>
    <ligand>
        <name>Mg(2+)</name>
        <dbReference type="ChEBI" id="CHEBI:18420"/>
        <note>shared with alpha subunit</note>
    </ligand>
</feature>
<feature type="binding site" evidence="1">
    <location>
        <position position="471"/>
    </location>
    <ligand>
        <name>Mg(2+)</name>
        <dbReference type="ChEBI" id="CHEBI:18420"/>
        <note>shared with alpha subunit</note>
    </ligand>
</feature>
<feature type="binding site" evidence="1">
    <location>
        <position position="472"/>
    </location>
    <ligand>
        <name>Mg(2+)</name>
        <dbReference type="ChEBI" id="CHEBI:18420"/>
        <note>shared with alpha subunit</note>
    </ligand>
</feature>
<reference key="1">
    <citation type="journal article" date="2001" name="Science">
        <title>Comparative genomics of Listeria species.</title>
        <authorList>
            <person name="Glaser P."/>
            <person name="Frangeul L."/>
            <person name="Buchrieser C."/>
            <person name="Rusniok C."/>
            <person name="Amend A."/>
            <person name="Baquero F."/>
            <person name="Berche P."/>
            <person name="Bloecker H."/>
            <person name="Brandt P."/>
            <person name="Chakraborty T."/>
            <person name="Charbit A."/>
            <person name="Chetouani F."/>
            <person name="Couve E."/>
            <person name="de Daruvar A."/>
            <person name="Dehoux P."/>
            <person name="Domann E."/>
            <person name="Dominguez-Bernal G."/>
            <person name="Duchaud E."/>
            <person name="Durant L."/>
            <person name="Dussurget O."/>
            <person name="Entian K.-D."/>
            <person name="Fsihi H."/>
            <person name="Garcia-del Portillo F."/>
            <person name="Garrido P."/>
            <person name="Gautier L."/>
            <person name="Goebel W."/>
            <person name="Gomez-Lopez N."/>
            <person name="Hain T."/>
            <person name="Hauf J."/>
            <person name="Jackson D."/>
            <person name="Jones L.-M."/>
            <person name="Kaerst U."/>
            <person name="Kreft J."/>
            <person name="Kuhn M."/>
            <person name="Kunst F."/>
            <person name="Kurapkat G."/>
            <person name="Madueno E."/>
            <person name="Maitournam A."/>
            <person name="Mata Vicente J."/>
            <person name="Ng E."/>
            <person name="Nedjari H."/>
            <person name="Nordsiek G."/>
            <person name="Novella S."/>
            <person name="de Pablos B."/>
            <person name="Perez-Diaz J.-C."/>
            <person name="Purcell R."/>
            <person name="Remmel B."/>
            <person name="Rose M."/>
            <person name="Schlueter T."/>
            <person name="Simoes N."/>
            <person name="Tierrez A."/>
            <person name="Vazquez-Boland J.-A."/>
            <person name="Voss H."/>
            <person name="Wehland J."/>
            <person name="Cossart P."/>
        </authorList>
    </citation>
    <scope>NUCLEOTIDE SEQUENCE [LARGE SCALE GENOMIC DNA]</scope>
    <source>
        <strain>ATCC BAA-680 / CLIP 11262</strain>
    </source>
</reference>
<accession>Q92CI6</accession>
<name>SYFB_LISIN</name>
<keyword id="KW-0030">Aminoacyl-tRNA synthetase</keyword>
<keyword id="KW-0067">ATP-binding</keyword>
<keyword id="KW-0963">Cytoplasm</keyword>
<keyword id="KW-0436">Ligase</keyword>
<keyword id="KW-0460">Magnesium</keyword>
<keyword id="KW-0479">Metal-binding</keyword>
<keyword id="KW-0547">Nucleotide-binding</keyword>
<keyword id="KW-0648">Protein biosynthesis</keyword>
<keyword id="KW-0694">RNA-binding</keyword>
<keyword id="KW-0820">tRNA-binding</keyword>
<gene>
    <name evidence="1" type="primary">pheT</name>
    <name type="ordered locus">lin1185</name>
</gene>
<comment type="catalytic activity">
    <reaction evidence="1">
        <text>tRNA(Phe) + L-phenylalanine + ATP = L-phenylalanyl-tRNA(Phe) + AMP + diphosphate + H(+)</text>
        <dbReference type="Rhea" id="RHEA:19413"/>
        <dbReference type="Rhea" id="RHEA-COMP:9668"/>
        <dbReference type="Rhea" id="RHEA-COMP:9699"/>
        <dbReference type="ChEBI" id="CHEBI:15378"/>
        <dbReference type="ChEBI" id="CHEBI:30616"/>
        <dbReference type="ChEBI" id="CHEBI:33019"/>
        <dbReference type="ChEBI" id="CHEBI:58095"/>
        <dbReference type="ChEBI" id="CHEBI:78442"/>
        <dbReference type="ChEBI" id="CHEBI:78531"/>
        <dbReference type="ChEBI" id="CHEBI:456215"/>
        <dbReference type="EC" id="6.1.1.20"/>
    </reaction>
</comment>
<comment type="cofactor">
    <cofactor evidence="1">
        <name>Mg(2+)</name>
        <dbReference type="ChEBI" id="CHEBI:18420"/>
    </cofactor>
    <text evidence="1">Binds 2 magnesium ions per tetramer.</text>
</comment>
<comment type="subunit">
    <text evidence="1">Tetramer of two alpha and two beta subunits.</text>
</comment>
<comment type="subcellular location">
    <subcellularLocation>
        <location evidence="1">Cytoplasm</location>
    </subcellularLocation>
</comment>
<comment type="similarity">
    <text evidence="1">Belongs to the phenylalanyl-tRNA synthetase beta subunit family. Type 1 subfamily.</text>
</comment>
<proteinExistence type="inferred from homology"/>
<evidence type="ECO:0000255" key="1">
    <source>
        <dbReference type="HAMAP-Rule" id="MF_00283"/>
    </source>
</evidence>
<dbReference type="EC" id="6.1.1.20" evidence="1"/>
<dbReference type="EMBL" id="AL596167">
    <property type="protein sequence ID" value="CAC96416.1"/>
    <property type="molecule type" value="Genomic_DNA"/>
</dbReference>
<dbReference type="PIR" id="AH1580">
    <property type="entry name" value="AH1580"/>
</dbReference>
<dbReference type="RefSeq" id="WP_010990817.1">
    <property type="nucleotide sequence ID" value="NC_003212.1"/>
</dbReference>
<dbReference type="SMR" id="Q92CI6"/>
<dbReference type="STRING" id="272626.gene:17565515"/>
<dbReference type="KEGG" id="lin:pheT.1"/>
<dbReference type="eggNOG" id="COG0072">
    <property type="taxonomic scope" value="Bacteria"/>
</dbReference>
<dbReference type="eggNOG" id="COG0073">
    <property type="taxonomic scope" value="Bacteria"/>
</dbReference>
<dbReference type="HOGENOM" id="CLU_016891_0_0_9"/>
<dbReference type="OrthoDB" id="9805455at2"/>
<dbReference type="Proteomes" id="UP000002513">
    <property type="component" value="Chromosome"/>
</dbReference>
<dbReference type="GO" id="GO:0009328">
    <property type="term" value="C:phenylalanine-tRNA ligase complex"/>
    <property type="evidence" value="ECO:0007669"/>
    <property type="project" value="TreeGrafter"/>
</dbReference>
<dbReference type="GO" id="GO:0005524">
    <property type="term" value="F:ATP binding"/>
    <property type="evidence" value="ECO:0007669"/>
    <property type="project" value="UniProtKB-UniRule"/>
</dbReference>
<dbReference type="GO" id="GO:0140096">
    <property type="term" value="F:catalytic activity, acting on a protein"/>
    <property type="evidence" value="ECO:0007669"/>
    <property type="project" value="UniProtKB-ARBA"/>
</dbReference>
<dbReference type="GO" id="GO:0000287">
    <property type="term" value="F:magnesium ion binding"/>
    <property type="evidence" value="ECO:0007669"/>
    <property type="project" value="UniProtKB-UniRule"/>
</dbReference>
<dbReference type="GO" id="GO:0004826">
    <property type="term" value="F:phenylalanine-tRNA ligase activity"/>
    <property type="evidence" value="ECO:0007669"/>
    <property type="project" value="UniProtKB-UniRule"/>
</dbReference>
<dbReference type="GO" id="GO:0016740">
    <property type="term" value="F:transferase activity"/>
    <property type="evidence" value="ECO:0007669"/>
    <property type="project" value="UniProtKB-ARBA"/>
</dbReference>
<dbReference type="GO" id="GO:0000049">
    <property type="term" value="F:tRNA binding"/>
    <property type="evidence" value="ECO:0007669"/>
    <property type="project" value="UniProtKB-KW"/>
</dbReference>
<dbReference type="GO" id="GO:0006432">
    <property type="term" value="P:phenylalanyl-tRNA aminoacylation"/>
    <property type="evidence" value="ECO:0007669"/>
    <property type="project" value="UniProtKB-UniRule"/>
</dbReference>
<dbReference type="CDD" id="cd00769">
    <property type="entry name" value="PheRS_beta_core"/>
    <property type="match status" value="1"/>
</dbReference>
<dbReference type="CDD" id="cd02796">
    <property type="entry name" value="tRNA_bind_bactPheRS"/>
    <property type="match status" value="1"/>
</dbReference>
<dbReference type="FunFam" id="2.40.50.140:FF:000045">
    <property type="entry name" value="Phenylalanine--tRNA ligase beta subunit"/>
    <property type="match status" value="1"/>
</dbReference>
<dbReference type="FunFam" id="3.30.56.10:FF:000002">
    <property type="entry name" value="Phenylalanine--tRNA ligase beta subunit"/>
    <property type="match status" value="1"/>
</dbReference>
<dbReference type="FunFam" id="3.30.70.380:FF:000001">
    <property type="entry name" value="Phenylalanine--tRNA ligase beta subunit"/>
    <property type="match status" value="1"/>
</dbReference>
<dbReference type="FunFam" id="3.30.930.10:FF:000022">
    <property type="entry name" value="Phenylalanine--tRNA ligase beta subunit"/>
    <property type="match status" value="1"/>
</dbReference>
<dbReference type="FunFam" id="3.50.40.10:FF:000001">
    <property type="entry name" value="Phenylalanine--tRNA ligase beta subunit"/>
    <property type="match status" value="1"/>
</dbReference>
<dbReference type="Gene3D" id="3.30.56.10">
    <property type="match status" value="2"/>
</dbReference>
<dbReference type="Gene3D" id="3.30.930.10">
    <property type="entry name" value="Bira Bifunctional Protein, Domain 2"/>
    <property type="match status" value="1"/>
</dbReference>
<dbReference type="Gene3D" id="3.30.70.380">
    <property type="entry name" value="Ferrodoxin-fold anticodon-binding domain"/>
    <property type="match status" value="1"/>
</dbReference>
<dbReference type="Gene3D" id="2.40.50.140">
    <property type="entry name" value="Nucleic acid-binding proteins"/>
    <property type="match status" value="1"/>
</dbReference>
<dbReference type="Gene3D" id="3.50.40.10">
    <property type="entry name" value="Phenylalanyl-trna Synthetase, Chain B, domain 3"/>
    <property type="match status" value="1"/>
</dbReference>
<dbReference type="HAMAP" id="MF_00283">
    <property type="entry name" value="Phe_tRNA_synth_beta1"/>
    <property type="match status" value="1"/>
</dbReference>
<dbReference type="InterPro" id="IPR045864">
    <property type="entry name" value="aa-tRNA-synth_II/BPL/LPL"/>
</dbReference>
<dbReference type="InterPro" id="IPR005146">
    <property type="entry name" value="B3/B4_tRNA-bd"/>
</dbReference>
<dbReference type="InterPro" id="IPR009061">
    <property type="entry name" value="DNA-bd_dom_put_sf"/>
</dbReference>
<dbReference type="InterPro" id="IPR005121">
    <property type="entry name" value="Fdx_antiC-bd"/>
</dbReference>
<dbReference type="InterPro" id="IPR036690">
    <property type="entry name" value="Fdx_antiC-bd_sf"/>
</dbReference>
<dbReference type="InterPro" id="IPR012340">
    <property type="entry name" value="NA-bd_OB-fold"/>
</dbReference>
<dbReference type="InterPro" id="IPR045060">
    <property type="entry name" value="Phe-tRNA-ligase_IIc_bsu"/>
</dbReference>
<dbReference type="InterPro" id="IPR004532">
    <property type="entry name" value="Phe-tRNA-ligase_IIc_bsu_bact"/>
</dbReference>
<dbReference type="InterPro" id="IPR020825">
    <property type="entry name" value="Phe-tRNA_synthase-like_B3/B4"/>
</dbReference>
<dbReference type="InterPro" id="IPR041616">
    <property type="entry name" value="PheRS_beta_core"/>
</dbReference>
<dbReference type="InterPro" id="IPR002547">
    <property type="entry name" value="tRNA-bd_dom"/>
</dbReference>
<dbReference type="InterPro" id="IPR033714">
    <property type="entry name" value="tRNA_bind_bactPheRS"/>
</dbReference>
<dbReference type="InterPro" id="IPR005147">
    <property type="entry name" value="tRNA_synthase_B5-dom"/>
</dbReference>
<dbReference type="NCBIfam" id="TIGR00472">
    <property type="entry name" value="pheT_bact"/>
    <property type="match status" value="1"/>
</dbReference>
<dbReference type="NCBIfam" id="NF045760">
    <property type="entry name" value="YtpR"/>
    <property type="match status" value="1"/>
</dbReference>
<dbReference type="PANTHER" id="PTHR10947:SF0">
    <property type="entry name" value="PHENYLALANINE--TRNA LIGASE BETA SUBUNIT"/>
    <property type="match status" value="1"/>
</dbReference>
<dbReference type="PANTHER" id="PTHR10947">
    <property type="entry name" value="PHENYLALANYL-TRNA SYNTHETASE BETA CHAIN AND LEUCINE-RICH REPEAT-CONTAINING PROTEIN 47"/>
    <property type="match status" value="1"/>
</dbReference>
<dbReference type="Pfam" id="PF03483">
    <property type="entry name" value="B3_4"/>
    <property type="match status" value="1"/>
</dbReference>
<dbReference type="Pfam" id="PF03484">
    <property type="entry name" value="B5"/>
    <property type="match status" value="1"/>
</dbReference>
<dbReference type="Pfam" id="PF03147">
    <property type="entry name" value="FDX-ACB"/>
    <property type="match status" value="1"/>
</dbReference>
<dbReference type="Pfam" id="PF01588">
    <property type="entry name" value="tRNA_bind"/>
    <property type="match status" value="1"/>
</dbReference>
<dbReference type="Pfam" id="PF17759">
    <property type="entry name" value="tRNA_synthFbeta"/>
    <property type="match status" value="1"/>
</dbReference>
<dbReference type="SMART" id="SM00873">
    <property type="entry name" value="B3_4"/>
    <property type="match status" value="1"/>
</dbReference>
<dbReference type="SMART" id="SM00874">
    <property type="entry name" value="B5"/>
    <property type="match status" value="1"/>
</dbReference>
<dbReference type="SMART" id="SM00896">
    <property type="entry name" value="FDX-ACB"/>
    <property type="match status" value="1"/>
</dbReference>
<dbReference type="SUPFAM" id="SSF54991">
    <property type="entry name" value="Anticodon-binding domain of PheRS"/>
    <property type="match status" value="1"/>
</dbReference>
<dbReference type="SUPFAM" id="SSF55681">
    <property type="entry name" value="Class II aaRS and biotin synthetases"/>
    <property type="match status" value="1"/>
</dbReference>
<dbReference type="SUPFAM" id="SSF50249">
    <property type="entry name" value="Nucleic acid-binding proteins"/>
    <property type="match status" value="1"/>
</dbReference>
<dbReference type="SUPFAM" id="SSF56037">
    <property type="entry name" value="PheT/TilS domain"/>
    <property type="match status" value="1"/>
</dbReference>
<dbReference type="SUPFAM" id="SSF46955">
    <property type="entry name" value="Putative DNA-binding domain"/>
    <property type="match status" value="1"/>
</dbReference>
<dbReference type="PROSITE" id="PS51483">
    <property type="entry name" value="B5"/>
    <property type="match status" value="1"/>
</dbReference>
<dbReference type="PROSITE" id="PS51447">
    <property type="entry name" value="FDX_ACB"/>
    <property type="match status" value="1"/>
</dbReference>
<dbReference type="PROSITE" id="PS50886">
    <property type="entry name" value="TRBD"/>
    <property type="match status" value="1"/>
</dbReference>
<sequence>MLVSYNWVKEFFQDFPLTAEELGEAITRTGIEIEGVEELSASLKNVVVGEVLSCERHPDAEKLNKCLVQTDEEEPVQIICGAPNVAAGQKVIVAKVGARLPGGLKIKRAKLRGEVSEGMICSLAELGFESKVVPKAYADGIYVLPEHVETGVSAITLLGLDDAILDMAITPNRADALSMNGVAHEVGAIIHQKPAQPTEPDVSEKGKADDFISVEVENPTETPYYAIKMVENIEIKESPLWLQTKLMKAGIRPHNNVVDVTNYINLLYGQPLHSFDYDKIGSKKIVVRSAKDQEEITTLDGEKRILQTGHTVITNGTEPIAIAGVMGGEFSEVTETTTTVALEGAIFSSSSVGKASRELYLRTEASIRYDKGSDAWKVEKALAHGGALIAELSGGTLVGGVVEVDNREKAVNKIETSLTRINRILGTEISLSEIETIFDRLGFVLEVKEDTLIIEVPTRRWDITIEADILEEVARIYGYDEIPVTLPATSTTGGLSDSQKARRVMRAYLEGAGLNQALTYSLTSKKDATRLALSDEKTVALSMPMSEEHSHLRTSIVPQLIRSASYNIARKNMDVALYEMGTVFYATEGDNLPIEQEHLAGLITGNWHTADWQKTPKPVDFFVLKGIVEGLVNKLGIEAELHWKQIEKEELHPGRTASIQLEGKEIGYLGALHPAVEASYDLKETYVFEINVKALLDATKEKVVYHPIPRYPEMTRDLALLVDKDTDHATISQVIKEHGGNLLVDIELFDIFEGESLGENKKSLAYTLTFLDSERTLVEEDVQKATNKVVEALQAKLHAIIR</sequence>
<organism>
    <name type="scientific">Listeria innocua serovar 6a (strain ATCC BAA-680 / CLIP 11262)</name>
    <dbReference type="NCBI Taxonomy" id="272626"/>
    <lineage>
        <taxon>Bacteria</taxon>
        <taxon>Bacillati</taxon>
        <taxon>Bacillota</taxon>
        <taxon>Bacilli</taxon>
        <taxon>Bacillales</taxon>
        <taxon>Listeriaceae</taxon>
        <taxon>Listeria</taxon>
    </lineage>
</organism>
<protein>
    <recommendedName>
        <fullName evidence="1">Phenylalanine--tRNA ligase beta subunit</fullName>
        <ecNumber evidence="1">6.1.1.20</ecNumber>
    </recommendedName>
    <alternativeName>
        <fullName evidence="1">Phenylalanyl-tRNA synthetase beta subunit</fullName>
        <shortName evidence="1">PheRS</shortName>
    </alternativeName>
</protein>